<name>RLMN_BURVG</name>
<comment type="function">
    <text evidence="1">Specifically methylates position 2 of adenine 2503 in 23S rRNA and position 2 of adenine 37 in tRNAs. m2A2503 modification seems to play a crucial role in the proofreading step occurring at the peptidyl transferase center and thus would serve to optimize ribosomal fidelity.</text>
</comment>
<comment type="catalytic activity">
    <reaction evidence="1">
        <text>adenosine(2503) in 23S rRNA + 2 reduced [2Fe-2S]-[ferredoxin] + 2 S-adenosyl-L-methionine = 2-methyladenosine(2503) in 23S rRNA + 5'-deoxyadenosine + L-methionine + 2 oxidized [2Fe-2S]-[ferredoxin] + S-adenosyl-L-homocysteine</text>
        <dbReference type="Rhea" id="RHEA:42916"/>
        <dbReference type="Rhea" id="RHEA-COMP:10000"/>
        <dbReference type="Rhea" id="RHEA-COMP:10001"/>
        <dbReference type="Rhea" id="RHEA-COMP:10152"/>
        <dbReference type="Rhea" id="RHEA-COMP:10282"/>
        <dbReference type="ChEBI" id="CHEBI:17319"/>
        <dbReference type="ChEBI" id="CHEBI:33737"/>
        <dbReference type="ChEBI" id="CHEBI:33738"/>
        <dbReference type="ChEBI" id="CHEBI:57844"/>
        <dbReference type="ChEBI" id="CHEBI:57856"/>
        <dbReference type="ChEBI" id="CHEBI:59789"/>
        <dbReference type="ChEBI" id="CHEBI:74411"/>
        <dbReference type="ChEBI" id="CHEBI:74497"/>
        <dbReference type="EC" id="2.1.1.192"/>
    </reaction>
</comment>
<comment type="catalytic activity">
    <reaction evidence="1">
        <text>adenosine(37) in tRNA + 2 reduced [2Fe-2S]-[ferredoxin] + 2 S-adenosyl-L-methionine = 2-methyladenosine(37) in tRNA + 5'-deoxyadenosine + L-methionine + 2 oxidized [2Fe-2S]-[ferredoxin] + S-adenosyl-L-homocysteine</text>
        <dbReference type="Rhea" id="RHEA:43332"/>
        <dbReference type="Rhea" id="RHEA-COMP:10000"/>
        <dbReference type="Rhea" id="RHEA-COMP:10001"/>
        <dbReference type="Rhea" id="RHEA-COMP:10162"/>
        <dbReference type="Rhea" id="RHEA-COMP:10485"/>
        <dbReference type="ChEBI" id="CHEBI:17319"/>
        <dbReference type="ChEBI" id="CHEBI:33737"/>
        <dbReference type="ChEBI" id="CHEBI:33738"/>
        <dbReference type="ChEBI" id="CHEBI:57844"/>
        <dbReference type="ChEBI" id="CHEBI:57856"/>
        <dbReference type="ChEBI" id="CHEBI:59789"/>
        <dbReference type="ChEBI" id="CHEBI:74411"/>
        <dbReference type="ChEBI" id="CHEBI:74497"/>
        <dbReference type="EC" id="2.1.1.192"/>
    </reaction>
</comment>
<comment type="cofactor">
    <cofactor evidence="1">
        <name>[4Fe-4S] cluster</name>
        <dbReference type="ChEBI" id="CHEBI:49883"/>
    </cofactor>
    <text evidence="1">Binds 1 [4Fe-4S] cluster. The cluster is coordinated with 3 cysteines and an exchangeable S-adenosyl-L-methionine.</text>
</comment>
<comment type="subcellular location">
    <subcellularLocation>
        <location evidence="1">Cytoplasm</location>
    </subcellularLocation>
</comment>
<comment type="miscellaneous">
    <text evidence="1">Reaction proceeds by a ping-pong mechanism involving intermediate methylation of a conserved cysteine residue.</text>
</comment>
<comment type="similarity">
    <text evidence="1">Belongs to the radical SAM superfamily. RlmN family.</text>
</comment>
<gene>
    <name evidence="1" type="primary">rlmN</name>
    <name type="ordered locus">Bcep1808_1741</name>
</gene>
<evidence type="ECO:0000255" key="1">
    <source>
        <dbReference type="HAMAP-Rule" id="MF_01849"/>
    </source>
</evidence>
<evidence type="ECO:0000255" key="2">
    <source>
        <dbReference type="PROSITE-ProRule" id="PRU01266"/>
    </source>
</evidence>
<reference key="1">
    <citation type="submission" date="2007-03" db="EMBL/GenBank/DDBJ databases">
        <title>Complete sequence of chromosome 1 of Burkholderia vietnamiensis G4.</title>
        <authorList>
            <consortium name="US DOE Joint Genome Institute"/>
            <person name="Copeland A."/>
            <person name="Lucas S."/>
            <person name="Lapidus A."/>
            <person name="Barry K."/>
            <person name="Detter J.C."/>
            <person name="Glavina del Rio T."/>
            <person name="Hammon N."/>
            <person name="Israni S."/>
            <person name="Dalin E."/>
            <person name="Tice H."/>
            <person name="Pitluck S."/>
            <person name="Chain P."/>
            <person name="Malfatti S."/>
            <person name="Shin M."/>
            <person name="Vergez L."/>
            <person name="Schmutz J."/>
            <person name="Larimer F."/>
            <person name="Land M."/>
            <person name="Hauser L."/>
            <person name="Kyrpides N."/>
            <person name="Tiedje J."/>
            <person name="Richardson P."/>
        </authorList>
    </citation>
    <scope>NUCLEOTIDE SEQUENCE [LARGE SCALE GENOMIC DNA]</scope>
    <source>
        <strain>G4 / LMG 22486</strain>
    </source>
</reference>
<sequence length="379" mass="41339">MTSETSVNLLDFDAEGLVAYCGSLGEKPFRAKQLQRWIHQYNAGDFDGMTDLAKSLREKLKGRATIGMPEIASDHVSADGTRKWLIDVGNGNAVETVFIPEETRGTLCVSSQAGCAVNCRFCSTGKQGFSRNLSTAEIIGQLRMAEFALRASLGRAPGPNGKAERVVTNVVMMGMGEPLLNYNAVVPAMRLMLDDNAYGLSRRRVTLSTSGVVPMMDRLGAELPVALAVSLHAPNDALRDELVPLNKKHPLRELMAACQRYLKVAPRDFITFEYCMLDGVNDTEAHARELLAVTRDVPCKFNLIPFNPFPESGLIRSKPEQIKRFAQVLIDAGVVTTVRKTRGDDIDAACGQLAGAVKDRTRLAERTGTAAKIIEVRAV</sequence>
<proteinExistence type="inferred from homology"/>
<protein>
    <recommendedName>
        <fullName evidence="1">Dual-specificity RNA methyltransferase RlmN</fullName>
        <ecNumber evidence="1">2.1.1.192</ecNumber>
    </recommendedName>
    <alternativeName>
        <fullName evidence="1">23S rRNA (adenine(2503)-C(2))-methyltransferase</fullName>
    </alternativeName>
    <alternativeName>
        <fullName evidence="1">23S rRNA m2A2503 methyltransferase</fullName>
    </alternativeName>
    <alternativeName>
        <fullName evidence="1">Ribosomal RNA large subunit methyltransferase N</fullName>
    </alternativeName>
    <alternativeName>
        <fullName evidence="1">tRNA (adenine(37)-C(2))-methyltransferase</fullName>
    </alternativeName>
    <alternativeName>
        <fullName evidence="1">tRNA m2A37 methyltransferase</fullName>
    </alternativeName>
</protein>
<keyword id="KW-0004">4Fe-4S</keyword>
<keyword id="KW-0963">Cytoplasm</keyword>
<keyword id="KW-1015">Disulfide bond</keyword>
<keyword id="KW-0408">Iron</keyword>
<keyword id="KW-0411">Iron-sulfur</keyword>
<keyword id="KW-0479">Metal-binding</keyword>
<keyword id="KW-0489">Methyltransferase</keyword>
<keyword id="KW-0698">rRNA processing</keyword>
<keyword id="KW-0949">S-adenosyl-L-methionine</keyword>
<keyword id="KW-0808">Transferase</keyword>
<keyword id="KW-0819">tRNA processing</keyword>
<organism>
    <name type="scientific">Burkholderia vietnamiensis (strain G4 / LMG 22486)</name>
    <name type="common">Burkholderia cepacia (strain R1808)</name>
    <dbReference type="NCBI Taxonomy" id="269482"/>
    <lineage>
        <taxon>Bacteria</taxon>
        <taxon>Pseudomonadati</taxon>
        <taxon>Pseudomonadota</taxon>
        <taxon>Betaproteobacteria</taxon>
        <taxon>Burkholderiales</taxon>
        <taxon>Burkholderiaceae</taxon>
        <taxon>Burkholderia</taxon>
        <taxon>Burkholderia cepacia complex</taxon>
    </lineage>
</organism>
<dbReference type="EC" id="2.1.1.192" evidence="1"/>
<dbReference type="EMBL" id="CP000614">
    <property type="protein sequence ID" value="ABO54745.1"/>
    <property type="molecule type" value="Genomic_DNA"/>
</dbReference>
<dbReference type="SMR" id="A4JEP2"/>
<dbReference type="KEGG" id="bvi:Bcep1808_1741"/>
<dbReference type="eggNOG" id="COG0820">
    <property type="taxonomic scope" value="Bacteria"/>
</dbReference>
<dbReference type="HOGENOM" id="CLU_029101_0_0_4"/>
<dbReference type="Proteomes" id="UP000002287">
    <property type="component" value="Chromosome 1"/>
</dbReference>
<dbReference type="GO" id="GO:0005737">
    <property type="term" value="C:cytoplasm"/>
    <property type="evidence" value="ECO:0007669"/>
    <property type="project" value="UniProtKB-SubCell"/>
</dbReference>
<dbReference type="GO" id="GO:0051539">
    <property type="term" value="F:4 iron, 4 sulfur cluster binding"/>
    <property type="evidence" value="ECO:0007669"/>
    <property type="project" value="UniProtKB-UniRule"/>
</dbReference>
<dbReference type="GO" id="GO:0046872">
    <property type="term" value="F:metal ion binding"/>
    <property type="evidence" value="ECO:0007669"/>
    <property type="project" value="UniProtKB-KW"/>
</dbReference>
<dbReference type="GO" id="GO:0070040">
    <property type="term" value="F:rRNA (adenine(2503)-C2-)-methyltransferase activity"/>
    <property type="evidence" value="ECO:0007669"/>
    <property type="project" value="UniProtKB-UniRule"/>
</dbReference>
<dbReference type="GO" id="GO:0019843">
    <property type="term" value="F:rRNA binding"/>
    <property type="evidence" value="ECO:0007669"/>
    <property type="project" value="UniProtKB-UniRule"/>
</dbReference>
<dbReference type="GO" id="GO:0002935">
    <property type="term" value="F:tRNA (adenine(37)-C2)-methyltransferase activity"/>
    <property type="evidence" value="ECO:0007669"/>
    <property type="project" value="UniProtKB-UniRule"/>
</dbReference>
<dbReference type="GO" id="GO:0000049">
    <property type="term" value="F:tRNA binding"/>
    <property type="evidence" value="ECO:0007669"/>
    <property type="project" value="UniProtKB-UniRule"/>
</dbReference>
<dbReference type="GO" id="GO:0070475">
    <property type="term" value="P:rRNA base methylation"/>
    <property type="evidence" value="ECO:0007669"/>
    <property type="project" value="UniProtKB-UniRule"/>
</dbReference>
<dbReference type="GO" id="GO:0030488">
    <property type="term" value="P:tRNA methylation"/>
    <property type="evidence" value="ECO:0007669"/>
    <property type="project" value="UniProtKB-UniRule"/>
</dbReference>
<dbReference type="CDD" id="cd01335">
    <property type="entry name" value="Radical_SAM"/>
    <property type="match status" value="1"/>
</dbReference>
<dbReference type="FunFam" id="1.10.150.530:FF:000003">
    <property type="entry name" value="Dual-specificity RNA methyltransferase RlmN"/>
    <property type="match status" value="1"/>
</dbReference>
<dbReference type="FunFam" id="3.20.20.70:FF:000008">
    <property type="entry name" value="Dual-specificity RNA methyltransferase RlmN"/>
    <property type="match status" value="1"/>
</dbReference>
<dbReference type="Gene3D" id="1.10.150.530">
    <property type="match status" value="1"/>
</dbReference>
<dbReference type="Gene3D" id="3.20.20.70">
    <property type="entry name" value="Aldolase class I"/>
    <property type="match status" value="1"/>
</dbReference>
<dbReference type="HAMAP" id="MF_01849">
    <property type="entry name" value="RNA_methyltr_RlmN"/>
    <property type="match status" value="1"/>
</dbReference>
<dbReference type="InterPro" id="IPR013785">
    <property type="entry name" value="Aldolase_TIM"/>
</dbReference>
<dbReference type="InterPro" id="IPR040072">
    <property type="entry name" value="Methyltransferase_A"/>
</dbReference>
<dbReference type="InterPro" id="IPR048641">
    <property type="entry name" value="RlmN_N"/>
</dbReference>
<dbReference type="InterPro" id="IPR027492">
    <property type="entry name" value="RNA_MTrfase_RlmN"/>
</dbReference>
<dbReference type="InterPro" id="IPR004383">
    <property type="entry name" value="rRNA_lsu_MTrfase_RlmN/Cfr"/>
</dbReference>
<dbReference type="InterPro" id="IPR007197">
    <property type="entry name" value="rSAM"/>
</dbReference>
<dbReference type="NCBIfam" id="TIGR00048">
    <property type="entry name" value="rRNA_mod_RlmN"/>
    <property type="match status" value="1"/>
</dbReference>
<dbReference type="PANTHER" id="PTHR30544">
    <property type="entry name" value="23S RRNA METHYLTRANSFERASE"/>
    <property type="match status" value="1"/>
</dbReference>
<dbReference type="PANTHER" id="PTHR30544:SF5">
    <property type="entry name" value="RADICAL SAM CORE DOMAIN-CONTAINING PROTEIN"/>
    <property type="match status" value="1"/>
</dbReference>
<dbReference type="Pfam" id="PF04055">
    <property type="entry name" value="Radical_SAM"/>
    <property type="match status" value="1"/>
</dbReference>
<dbReference type="Pfam" id="PF21016">
    <property type="entry name" value="RlmN_N"/>
    <property type="match status" value="1"/>
</dbReference>
<dbReference type="PIRSF" id="PIRSF006004">
    <property type="entry name" value="CHP00048"/>
    <property type="match status" value="1"/>
</dbReference>
<dbReference type="SFLD" id="SFLDF00275">
    <property type="entry name" value="adenosine_C2_methyltransferase"/>
    <property type="match status" value="1"/>
</dbReference>
<dbReference type="SFLD" id="SFLDG01062">
    <property type="entry name" value="methyltransferase_(Class_A)"/>
    <property type="match status" value="1"/>
</dbReference>
<dbReference type="SUPFAM" id="SSF102114">
    <property type="entry name" value="Radical SAM enzymes"/>
    <property type="match status" value="1"/>
</dbReference>
<dbReference type="PROSITE" id="PS51918">
    <property type="entry name" value="RADICAL_SAM"/>
    <property type="match status" value="1"/>
</dbReference>
<accession>A4JEP2</accession>
<feature type="chain" id="PRO_0000350087" description="Dual-specificity RNA methyltransferase RlmN">
    <location>
        <begin position="1"/>
        <end position="379"/>
    </location>
</feature>
<feature type="domain" description="Radical SAM core" evidence="2">
    <location>
        <begin position="101"/>
        <end position="345"/>
    </location>
</feature>
<feature type="active site" description="Proton acceptor" evidence="1">
    <location>
        <position position="95"/>
    </location>
</feature>
<feature type="active site" description="S-methylcysteine intermediate" evidence="1">
    <location>
        <position position="350"/>
    </location>
</feature>
<feature type="binding site" evidence="1">
    <location>
        <position position="115"/>
    </location>
    <ligand>
        <name>[4Fe-4S] cluster</name>
        <dbReference type="ChEBI" id="CHEBI:49883"/>
        <note>4Fe-4S-S-AdoMet</note>
    </ligand>
</feature>
<feature type="binding site" evidence="1">
    <location>
        <position position="119"/>
    </location>
    <ligand>
        <name>[4Fe-4S] cluster</name>
        <dbReference type="ChEBI" id="CHEBI:49883"/>
        <note>4Fe-4S-S-AdoMet</note>
    </ligand>
</feature>
<feature type="binding site" evidence="1">
    <location>
        <position position="122"/>
    </location>
    <ligand>
        <name>[4Fe-4S] cluster</name>
        <dbReference type="ChEBI" id="CHEBI:49883"/>
        <note>4Fe-4S-S-AdoMet</note>
    </ligand>
</feature>
<feature type="binding site" evidence="1">
    <location>
        <begin position="176"/>
        <end position="177"/>
    </location>
    <ligand>
        <name>S-adenosyl-L-methionine</name>
        <dbReference type="ChEBI" id="CHEBI:59789"/>
    </ligand>
</feature>
<feature type="binding site" evidence="1">
    <location>
        <position position="208"/>
    </location>
    <ligand>
        <name>S-adenosyl-L-methionine</name>
        <dbReference type="ChEBI" id="CHEBI:59789"/>
    </ligand>
</feature>
<feature type="binding site" evidence="1">
    <location>
        <begin position="230"/>
        <end position="232"/>
    </location>
    <ligand>
        <name>S-adenosyl-L-methionine</name>
        <dbReference type="ChEBI" id="CHEBI:59789"/>
    </ligand>
</feature>
<feature type="binding site" evidence="1">
    <location>
        <position position="307"/>
    </location>
    <ligand>
        <name>S-adenosyl-L-methionine</name>
        <dbReference type="ChEBI" id="CHEBI:59789"/>
    </ligand>
</feature>
<feature type="disulfide bond" description="(transient)" evidence="1">
    <location>
        <begin position="108"/>
        <end position="350"/>
    </location>
</feature>